<protein>
    <recommendedName>
        <fullName evidence="1">Protease HtpX homolog</fullName>
        <ecNumber evidence="1">3.4.24.-</ecNumber>
    </recommendedName>
</protein>
<dbReference type="EC" id="3.4.24.-" evidence="1"/>
<dbReference type="EMBL" id="CP000463">
    <property type="protein sequence ID" value="ABJ04852.1"/>
    <property type="molecule type" value="Genomic_DNA"/>
</dbReference>
<dbReference type="STRING" id="316055.RPE_0896"/>
<dbReference type="KEGG" id="rpe:RPE_0896"/>
<dbReference type="eggNOG" id="COG0501">
    <property type="taxonomic scope" value="Bacteria"/>
</dbReference>
<dbReference type="HOGENOM" id="CLU_042266_3_0_5"/>
<dbReference type="OrthoDB" id="15218at2"/>
<dbReference type="GO" id="GO:0005886">
    <property type="term" value="C:plasma membrane"/>
    <property type="evidence" value="ECO:0007669"/>
    <property type="project" value="UniProtKB-SubCell"/>
</dbReference>
<dbReference type="GO" id="GO:0004222">
    <property type="term" value="F:metalloendopeptidase activity"/>
    <property type="evidence" value="ECO:0007669"/>
    <property type="project" value="UniProtKB-UniRule"/>
</dbReference>
<dbReference type="GO" id="GO:0008270">
    <property type="term" value="F:zinc ion binding"/>
    <property type="evidence" value="ECO:0007669"/>
    <property type="project" value="UniProtKB-UniRule"/>
</dbReference>
<dbReference type="GO" id="GO:0006508">
    <property type="term" value="P:proteolysis"/>
    <property type="evidence" value="ECO:0007669"/>
    <property type="project" value="UniProtKB-KW"/>
</dbReference>
<dbReference type="CDD" id="cd07336">
    <property type="entry name" value="M48B_HtpX_like"/>
    <property type="match status" value="1"/>
</dbReference>
<dbReference type="Gene3D" id="3.30.2010.10">
    <property type="entry name" value="Metalloproteases ('zincins'), catalytic domain"/>
    <property type="match status" value="1"/>
</dbReference>
<dbReference type="HAMAP" id="MF_00188">
    <property type="entry name" value="Pept_M48_protease_HtpX"/>
    <property type="match status" value="1"/>
</dbReference>
<dbReference type="InterPro" id="IPR050083">
    <property type="entry name" value="HtpX_protease"/>
</dbReference>
<dbReference type="InterPro" id="IPR022919">
    <property type="entry name" value="Pept_M48_protease_HtpX"/>
</dbReference>
<dbReference type="InterPro" id="IPR001915">
    <property type="entry name" value="Peptidase_M48"/>
</dbReference>
<dbReference type="NCBIfam" id="NF002363">
    <property type="entry name" value="PRK01345.1"/>
    <property type="match status" value="1"/>
</dbReference>
<dbReference type="NCBIfam" id="NF002826">
    <property type="entry name" value="PRK03001.1"/>
    <property type="match status" value="1"/>
</dbReference>
<dbReference type="PANTHER" id="PTHR43221">
    <property type="entry name" value="PROTEASE HTPX"/>
    <property type="match status" value="1"/>
</dbReference>
<dbReference type="PANTHER" id="PTHR43221:SF1">
    <property type="entry name" value="PROTEASE HTPX"/>
    <property type="match status" value="1"/>
</dbReference>
<dbReference type="Pfam" id="PF01435">
    <property type="entry name" value="Peptidase_M48"/>
    <property type="match status" value="1"/>
</dbReference>
<proteinExistence type="inferred from homology"/>
<feature type="chain" id="PRO_1000020924" description="Protease HtpX homolog">
    <location>
        <begin position="1"/>
        <end position="309"/>
    </location>
</feature>
<feature type="transmembrane region" description="Helical" evidence="1">
    <location>
        <begin position="7"/>
        <end position="27"/>
    </location>
</feature>
<feature type="transmembrane region" description="Helical" evidence="1">
    <location>
        <begin position="28"/>
        <end position="48"/>
    </location>
</feature>
<feature type="transmembrane region" description="Helical" evidence="1">
    <location>
        <begin position="145"/>
        <end position="165"/>
    </location>
</feature>
<feature type="transmembrane region" description="Helical" evidence="1">
    <location>
        <begin position="173"/>
        <end position="193"/>
    </location>
</feature>
<feature type="active site" evidence="1">
    <location>
        <position position="131"/>
    </location>
</feature>
<feature type="binding site" evidence="1">
    <location>
        <position position="130"/>
    </location>
    <ligand>
        <name>Zn(2+)</name>
        <dbReference type="ChEBI" id="CHEBI:29105"/>
        <note>catalytic</note>
    </ligand>
</feature>
<feature type="binding site" evidence="1">
    <location>
        <position position="134"/>
    </location>
    <ligand>
        <name>Zn(2+)</name>
        <dbReference type="ChEBI" id="CHEBI:29105"/>
        <note>catalytic</note>
    </ligand>
</feature>
<feature type="binding site" evidence="1">
    <location>
        <position position="202"/>
    </location>
    <ligand>
        <name>Zn(2+)</name>
        <dbReference type="ChEBI" id="CHEBI:29105"/>
        <note>catalytic</note>
    </ligand>
</feature>
<organism>
    <name type="scientific">Rhodopseudomonas palustris (strain BisA53)</name>
    <dbReference type="NCBI Taxonomy" id="316055"/>
    <lineage>
        <taxon>Bacteria</taxon>
        <taxon>Pseudomonadati</taxon>
        <taxon>Pseudomonadota</taxon>
        <taxon>Alphaproteobacteria</taxon>
        <taxon>Hyphomicrobiales</taxon>
        <taxon>Nitrobacteraceae</taxon>
        <taxon>Rhodopseudomonas</taxon>
    </lineage>
</organism>
<accession>Q07T82</accession>
<sequence>MSYFKTAILLAGLTALFMGVGYLIGGASGAMIALVVAAATNIFAYWNSDKMVLSMYGAQQVDERSAPDLVRMVAGLAGNAQLPMPKVFIMDNPQPNAFATGRNPENAAVAVTTGLMQSLSREELAGVIAHELAHVKNHDTLLMTVTATIAGAVSMLAQFGMFFGGNRDNNNGGLGVIGSIAMMILAPIAAMLVQMAISRSREYAADDLGARICGQPTWLASALAKIENAAHQVPNYDAERAPATAHMFIINPLTGQGMDNLFATHPSTQNRIAALQQLATTLGIRAPQRAAAPARGLWGGAPRSRGPWG</sequence>
<gene>
    <name evidence="1" type="primary">htpX</name>
    <name type="ordered locus">RPE_0896</name>
</gene>
<name>HTPX_RHOP5</name>
<keyword id="KW-0997">Cell inner membrane</keyword>
<keyword id="KW-1003">Cell membrane</keyword>
<keyword id="KW-0378">Hydrolase</keyword>
<keyword id="KW-0472">Membrane</keyword>
<keyword id="KW-0479">Metal-binding</keyword>
<keyword id="KW-0482">Metalloprotease</keyword>
<keyword id="KW-0645">Protease</keyword>
<keyword id="KW-0812">Transmembrane</keyword>
<keyword id="KW-1133">Transmembrane helix</keyword>
<keyword id="KW-0862">Zinc</keyword>
<comment type="cofactor">
    <cofactor evidence="1">
        <name>Zn(2+)</name>
        <dbReference type="ChEBI" id="CHEBI:29105"/>
    </cofactor>
    <text evidence="1">Binds 1 zinc ion per subunit.</text>
</comment>
<comment type="subcellular location">
    <subcellularLocation>
        <location evidence="1">Cell inner membrane</location>
        <topology evidence="1">Multi-pass membrane protein</topology>
    </subcellularLocation>
</comment>
<comment type="similarity">
    <text evidence="1">Belongs to the peptidase M48B family.</text>
</comment>
<evidence type="ECO:0000255" key="1">
    <source>
        <dbReference type="HAMAP-Rule" id="MF_00188"/>
    </source>
</evidence>
<reference key="1">
    <citation type="submission" date="2006-09" db="EMBL/GenBank/DDBJ databases">
        <title>Complete sequence of Rhodopseudomonas palustris BisA53.</title>
        <authorList>
            <consortium name="US DOE Joint Genome Institute"/>
            <person name="Copeland A."/>
            <person name="Lucas S."/>
            <person name="Lapidus A."/>
            <person name="Barry K."/>
            <person name="Detter J.C."/>
            <person name="Glavina del Rio T."/>
            <person name="Hammon N."/>
            <person name="Israni S."/>
            <person name="Dalin E."/>
            <person name="Tice H."/>
            <person name="Pitluck S."/>
            <person name="Chain P."/>
            <person name="Malfatti S."/>
            <person name="Shin M."/>
            <person name="Vergez L."/>
            <person name="Schmutz J."/>
            <person name="Larimer F."/>
            <person name="Land M."/>
            <person name="Hauser L."/>
            <person name="Pelletier D.A."/>
            <person name="Kyrpides N."/>
            <person name="Kim E."/>
            <person name="Harwood C.S."/>
            <person name="Oda Y."/>
            <person name="Richardson P."/>
        </authorList>
    </citation>
    <scope>NUCLEOTIDE SEQUENCE [LARGE SCALE GENOMIC DNA]</scope>
    <source>
        <strain>BisA53</strain>
    </source>
</reference>